<gene>
    <name evidence="1" type="primary">ispH</name>
    <name type="ordered locus">Msil_3225</name>
</gene>
<organism>
    <name type="scientific">Methylocella silvestris (strain DSM 15510 / CIP 108128 / LMG 27833 / NCIMB 13906 / BL2)</name>
    <dbReference type="NCBI Taxonomy" id="395965"/>
    <lineage>
        <taxon>Bacteria</taxon>
        <taxon>Pseudomonadati</taxon>
        <taxon>Pseudomonadota</taxon>
        <taxon>Alphaproteobacteria</taxon>
        <taxon>Hyphomicrobiales</taxon>
        <taxon>Beijerinckiaceae</taxon>
        <taxon>Methylocella</taxon>
    </lineage>
</organism>
<evidence type="ECO:0000255" key="1">
    <source>
        <dbReference type="HAMAP-Rule" id="MF_00191"/>
    </source>
</evidence>
<dbReference type="EC" id="1.17.7.4" evidence="1"/>
<dbReference type="EMBL" id="CP001280">
    <property type="protein sequence ID" value="ACK52132.1"/>
    <property type="molecule type" value="Genomic_DNA"/>
</dbReference>
<dbReference type="RefSeq" id="WP_012592201.1">
    <property type="nucleotide sequence ID" value="NC_011666.1"/>
</dbReference>
<dbReference type="SMR" id="B8EQB9"/>
<dbReference type="STRING" id="395965.Msil_3225"/>
<dbReference type="KEGG" id="msl:Msil_3225"/>
<dbReference type="eggNOG" id="COG0761">
    <property type="taxonomic scope" value="Bacteria"/>
</dbReference>
<dbReference type="HOGENOM" id="CLU_027486_1_0_5"/>
<dbReference type="OrthoDB" id="9804068at2"/>
<dbReference type="UniPathway" id="UPA00056">
    <property type="reaction ID" value="UER00097"/>
</dbReference>
<dbReference type="UniPathway" id="UPA00059">
    <property type="reaction ID" value="UER00105"/>
</dbReference>
<dbReference type="Proteomes" id="UP000002257">
    <property type="component" value="Chromosome"/>
</dbReference>
<dbReference type="GO" id="GO:0051539">
    <property type="term" value="F:4 iron, 4 sulfur cluster binding"/>
    <property type="evidence" value="ECO:0007669"/>
    <property type="project" value="UniProtKB-UniRule"/>
</dbReference>
<dbReference type="GO" id="GO:0051745">
    <property type="term" value="F:4-hydroxy-3-methylbut-2-enyl diphosphate reductase activity"/>
    <property type="evidence" value="ECO:0007669"/>
    <property type="project" value="UniProtKB-UniRule"/>
</dbReference>
<dbReference type="GO" id="GO:0046872">
    <property type="term" value="F:metal ion binding"/>
    <property type="evidence" value="ECO:0007669"/>
    <property type="project" value="UniProtKB-KW"/>
</dbReference>
<dbReference type="GO" id="GO:0050992">
    <property type="term" value="P:dimethylallyl diphosphate biosynthetic process"/>
    <property type="evidence" value="ECO:0007669"/>
    <property type="project" value="UniProtKB-UniRule"/>
</dbReference>
<dbReference type="GO" id="GO:0019288">
    <property type="term" value="P:isopentenyl diphosphate biosynthetic process, methylerythritol 4-phosphate pathway"/>
    <property type="evidence" value="ECO:0007669"/>
    <property type="project" value="UniProtKB-UniRule"/>
</dbReference>
<dbReference type="GO" id="GO:0016114">
    <property type="term" value="P:terpenoid biosynthetic process"/>
    <property type="evidence" value="ECO:0007669"/>
    <property type="project" value="UniProtKB-UniRule"/>
</dbReference>
<dbReference type="CDD" id="cd13944">
    <property type="entry name" value="lytB_ispH"/>
    <property type="match status" value="1"/>
</dbReference>
<dbReference type="Gene3D" id="3.40.50.11270">
    <property type="match status" value="1"/>
</dbReference>
<dbReference type="Gene3D" id="3.40.1010.20">
    <property type="entry name" value="4-hydroxy-3-methylbut-2-enyl diphosphate reductase, catalytic domain"/>
    <property type="match status" value="2"/>
</dbReference>
<dbReference type="HAMAP" id="MF_00191">
    <property type="entry name" value="IspH"/>
    <property type="match status" value="1"/>
</dbReference>
<dbReference type="InterPro" id="IPR003451">
    <property type="entry name" value="LytB/IspH"/>
</dbReference>
<dbReference type="NCBIfam" id="TIGR00216">
    <property type="entry name" value="ispH_lytB"/>
    <property type="match status" value="1"/>
</dbReference>
<dbReference type="NCBIfam" id="NF002188">
    <property type="entry name" value="PRK01045.1-2"/>
    <property type="match status" value="1"/>
</dbReference>
<dbReference type="NCBIfam" id="NF002190">
    <property type="entry name" value="PRK01045.1-4"/>
    <property type="match status" value="1"/>
</dbReference>
<dbReference type="PANTHER" id="PTHR30426">
    <property type="entry name" value="4-HYDROXY-3-METHYLBUT-2-ENYL DIPHOSPHATE REDUCTASE"/>
    <property type="match status" value="1"/>
</dbReference>
<dbReference type="PANTHER" id="PTHR30426:SF0">
    <property type="entry name" value="4-HYDROXY-3-METHYLBUT-2-ENYL DIPHOSPHATE REDUCTASE"/>
    <property type="match status" value="1"/>
</dbReference>
<dbReference type="Pfam" id="PF02401">
    <property type="entry name" value="LYTB"/>
    <property type="match status" value="1"/>
</dbReference>
<accession>B8EQB9</accession>
<proteinExistence type="inferred from homology"/>
<comment type="function">
    <text evidence="1">Catalyzes the conversion of 1-hydroxy-2-methyl-2-(E)-butenyl 4-diphosphate (HMBPP) into a mixture of isopentenyl diphosphate (IPP) and dimethylallyl diphosphate (DMAPP). Acts in the terminal step of the DOXP/MEP pathway for isoprenoid precursor biosynthesis.</text>
</comment>
<comment type="catalytic activity">
    <reaction evidence="1">
        <text>isopentenyl diphosphate + 2 oxidized [2Fe-2S]-[ferredoxin] + H2O = (2E)-4-hydroxy-3-methylbut-2-enyl diphosphate + 2 reduced [2Fe-2S]-[ferredoxin] + 2 H(+)</text>
        <dbReference type="Rhea" id="RHEA:24488"/>
        <dbReference type="Rhea" id="RHEA-COMP:10000"/>
        <dbReference type="Rhea" id="RHEA-COMP:10001"/>
        <dbReference type="ChEBI" id="CHEBI:15377"/>
        <dbReference type="ChEBI" id="CHEBI:15378"/>
        <dbReference type="ChEBI" id="CHEBI:33737"/>
        <dbReference type="ChEBI" id="CHEBI:33738"/>
        <dbReference type="ChEBI" id="CHEBI:128753"/>
        <dbReference type="ChEBI" id="CHEBI:128769"/>
        <dbReference type="EC" id="1.17.7.4"/>
    </reaction>
</comment>
<comment type="catalytic activity">
    <reaction evidence="1">
        <text>dimethylallyl diphosphate + 2 oxidized [2Fe-2S]-[ferredoxin] + H2O = (2E)-4-hydroxy-3-methylbut-2-enyl diphosphate + 2 reduced [2Fe-2S]-[ferredoxin] + 2 H(+)</text>
        <dbReference type="Rhea" id="RHEA:24825"/>
        <dbReference type="Rhea" id="RHEA-COMP:10000"/>
        <dbReference type="Rhea" id="RHEA-COMP:10001"/>
        <dbReference type="ChEBI" id="CHEBI:15377"/>
        <dbReference type="ChEBI" id="CHEBI:15378"/>
        <dbReference type="ChEBI" id="CHEBI:33737"/>
        <dbReference type="ChEBI" id="CHEBI:33738"/>
        <dbReference type="ChEBI" id="CHEBI:57623"/>
        <dbReference type="ChEBI" id="CHEBI:128753"/>
        <dbReference type="EC" id="1.17.7.4"/>
    </reaction>
</comment>
<comment type="cofactor">
    <cofactor evidence="1">
        <name>[4Fe-4S] cluster</name>
        <dbReference type="ChEBI" id="CHEBI:49883"/>
    </cofactor>
    <text evidence="1">Binds 1 [4Fe-4S] cluster per subunit.</text>
</comment>
<comment type="pathway">
    <text evidence="1">Isoprenoid biosynthesis; dimethylallyl diphosphate biosynthesis; dimethylallyl diphosphate from (2E)-4-hydroxy-3-methylbutenyl diphosphate: step 1/1.</text>
</comment>
<comment type="pathway">
    <text evidence="1">Isoprenoid biosynthesis; isopentenyl diphosphate biosynthesis via DXP pathway; isopentenyl diphosphate from 1-deoxy-D-xylulose 5-phosphate: step 6/6.</text>
</comment>
<comment type="similarity">
    <text evidence="1">Belongs to the IspH family.</text>
</comment>
<protein>
    <recommendedName>
        <fullName evidence="1">4-hydroxy-3-methylbut-2-enyl diphosphate reductase</fullName>
        <shortName evidence="1">HMBPP reductase</shortName>
        <ecNumber evidence="1">1.17.7.4</ecNumber>
    </recommendedName>
</protein>
<sequence>MTVKPKLNVLLCAPRGFCAGVVRAIDAVEEALRIYGAPVYVRHEIVHNKYVVETLKSKGAVFVEELDEVPDTSQPVIFSAHGVPKSIPVEAATRNIFAIDATCPLVTKVHREAELHHKRGRQVLLVGHAGHPEVVGTIGQLPAGSILLVQTIEDIASLQVEDEHNLSYVTQTTLSVDDTRSMVEALTRRFPDIVGPHREDICYATTNRQEAVKQVAPIVDALIVVGSSNSSNSQRLKEVAERSGCKLARLVLRAEDVEWELFANISSLAITAGASAPEILVEEIMDAFAERFDLHVEEVSTANEGVFFPLPRELRRATV</sequence>
<keyword id="KW-0004">4Fe-4S</keyword>
<keyword id="KW-0408">Iron</keyword>
<keyword id="KW-0411">Iron-sulfur</keyword>
<keyword id="KW-0414">Isoprene biosynthesis</keyword>
<keyword id="KW-0479">Metal-binding</keyword>
<keyword id="KW-0560">Oxidoreductase</keyword>
<keyword id="KW-1185">Reference proteome</keyword>
<name>ISPH_METSB</name>
<feature type="chain" id="PRO_1000124289" description="4-hydroxy-3-methylbut-2-enyl diphosphate reductase">
    <location>
        <begin position="1"/>
        <end position="319"/>
    </location>
</feature>
<feature type="active site" description="Proton donor" evidence="1">
    <location>
        <position position="133"/>
    </location>
</feature>
<feature type="binding site" evidence="1">
    <location>
        <position position="18"/>
    </location>
    <ligand>
        <name>[4Fe-4S] cluster</name>
        <dbReference type="ChEBI" id="CHEBI:49883"/>
    </ligand>
</feature>
<feature type="binding site" evidence="1">
    <location>
        <position position="47"/>
    </location>
    <ligand>
        <name>(2E)-4-hydroxy-3-methylbut-2-enyl diphosphate</name>
        <dbReference type="ChEBI" id="CHEBI:128753"/>
    </ligand>
</feature>
<feature type="binding site" evidence="1">
    <location>
        <position position="47"/>
    </location>
    <ligand>
        <name>dimethylallyl diphosphate</name>
        <dbReference type="ChEBI" id="CHEBI:57623"/>
    </ligand>
</feature>
<feature type="binding site" evidence="1">
    <location>
        <position position="47"/>
    </location>
    <ligand>
        <name>isopentenyl diphosphate</name>
        <dbReference type="ChEBI" id="CHEBI:128769"/>
    </ligand>
</feature>
<feature type="binding site" evidence="1">
    <location>
        <position position="81"/>
    </location>
    <ligand>
        <name>(2E)-4-hydroxy-3-methylbut-2-enyl diphosphate</name>
        <dbReference type="ChEBI" id="CHEBI:128753"/>
    </ligand>
</feature>
<feature type="binding site" evidence="1">
    <location>
        <position position="81"/>
    </location>
    <ligand>
        <name>dimethylallyl diphosphate</name>
        <dbReference type="ChEBI" id="CHEBI:57623"/>
    </ligand>
</feature>
<feature type="binding site" evidence="1">
    <location>
        <position position="81"/>
    </location>
    <ligand>
        <name>isopentenyl diphosphate</name>
        <dbReference type="ChEBI" id="CHEBI:128769"/>
    </ligand>
</feature>
<feature type="binding site" evidence="1">
    <location>
        <position position="103"/>
    </location>
    <ligand>
        <name>[4Fe-4S] cluster</name>
        <dbReference type="ChEBI" id="CHEBI:49883"/>
    </ligand>
</feature>
<feature type="binding site" evidence="1">
    <location>
        <position position="131"/>
    </location>
    <ligand>
        <name>(2E)-4-hydroxy-3-methylbut-2-enyl diphosphate</name>
        <dbReference type="ChEBI" id="CHEBI:128753"/>
    </ligand>
</feature>
<feature type="binding site" evidence="1">
    <location>
        <position position="131"/>
    </location>
    <ligand>
        <name>dimethylallyl diphosphate</name>
        <dbReference type="ChEBI" id="CHEBI:57623"/>
    </ligand>
</feature>
<feature type="binding site" evidence="1">
    <location>
        <position position="131"/>
    </location>
    <ligand>
        <name>isopentenyl diphosphate</name>
        <dbReference type="ChEBI" id="CHEBI:128769"/>
    </ligand>
</feature>
<feature type="binding site" evidence="1">
    <location>
        <position position="172"/>
    </location>
    <ligand>
        <name>(2E)-4-hydroxy-3-methylbut-2-enyl diphosphate</name>
        <dbReference type="ChEBI" id="CHEBI:128753"/>
    </ligand>
</feature>
<feature type="binding site" evidence="1">
    <location>
        <position position="202"/>
    </location>
    <ligand>
        <name>[4Fe-4S] cluster</name>
        <dbReference type="ChEBI" id="CHEBI:49883"/>
    </ligand>
</feature>
<feature type="binding site" evidence="1">
    <location>
        <position position="230"/>
    </location>
    <ligand>
        <name>(2E)-4-hydroxy-3-methylbut-2-enyl diphosphate</name>
        <dbReference type="ChEBI" id="CHEBI:128753"/>
    </ligand>
</feature>
<feature type="binding site" evidence="1">
    <location>
        <position position="230"/>
    </location>
    <ligand>
        <name>dimethylallyl diphosphate</name>
        <dbReference type="ChEBI" id="CHEBI:57623"/>
    </ligand>
</feature>
<feature type="binding site" evidence="1">
    <location>
        <position position="230"/>
    </location>
    <ligand>
        <name>isopentenyl diphosphate</name>
        <dbReference type="ChEBI" id="CHEBI:128769"/>
    </ligand>
</feature>
<feature type="binding site" evidence="1">
    <location>
        <position position="231"/>
    </location>
    <ligand>
        <name>(2E)-4-hydroxy-3-methylbut-2-enyl diphosphate</name>
        <dbReference type="ChEBI" id="CHEBI:128753"/>
    </ligand>
</feature>
<feature type="binding site" evidence="1">
    <location>
        <position position="231"/>
    </location>
    <ligand>
        <name>dimethylallyl diphosphate</name>
        <dbReference type="ChEBI" id="CHEBI:57623"/>
    </ligand>
</feature>
<feature type="binding site" evidence="1">
    <location>
        <position position="231"/>
    </location>
    <ligand>
        <name>isopentenyl diphosphate</name>
        <dbReference type="ChEBI" id="CHEBI:128769"/>
    </ligand>
</feature>
<feature type="binding site" evidence="1">
    <location>
        <position position="232"/>
    </location>
    <ligand>
        <name>(2E)-4-hydroxy-3-methylbut-2-enyl diphosphate</name>
        <dbReference type="ChEBI" id="CHEBI:128753"/>
    </ligand>
</feature>
<feature type="binding site" evidence="1">
    <location>
        <position position="232"/>
    </location>
    <ligand>
        <name>dimethylallyl diphosphate</name>
        <dbReference type="ChEBI" id="CHEBI:57623"/>
    </ligand>
</feature>
<feature type="binding site" evidence="1">
    <location>
        <position position="232"/>
    </location>
    <ligand>
        <name>isopentenyl diphosphate</name>
        <dbReference type="ChEBI" id="CHEBI:128769"/>
    </ligand>
</feature>
<feature type="binding site" evidence="1">
    <location>
        <position position="275"/>
    </location>
    <ligand>
        <name>(2E)-4-hydroxy-3-methylbut-2-enyl diphosphate</name>
        <dbReference type="ChEBI" id="CHEBI:128753"/>
    </ligand>
</feature>
<feature type="binding site" evidence="1">
    <location>
        <position position="275"/>
    </location>
    <ligand>
        <name>dimethylallyl diphosphate</name>
        <dbReference type="ChEBI" id="CHEBI:57623"/>
    </ligand>
</feature>
<feature type="binding site" evidence="1">
    <location>
        <position position="275"/>
    </location>
    <ligand>
        <name>isopentenyl diphosphate</name>
        <dbReference type="ChEBI" id="CHEBI:128769"/>
    </ligand>
</feature>
<reference key="1">
    <citation type="journal article" date="2010" name="J. Bacteriol.">
        <title>Complete genome sequence of the aerobic facultative methanotroph Methylocella silvestris BL2.</title>
        <authorList>
            <person name="Chen Y."/>
            <person name="Crombie A."/>
            <person name="Rahman M.T."/>
            <person name="Dedysh S.N."/>
            <person name="Liesack W."/>
            <person name="Stott M.B."/>
            <person name="Alam M."/>
            <person name="Theisen A.R."/>
            <person name="Murrell J.C."/>
            <person name="Dunfield P.F."/>
        </authorList>
    </citation>
    <scope>NUCLEOTIDE SEQUENCE [LARGE SCALE GENOMIC DNA]</scope>
    <source>
        <strain>DSM 15510 / CIP 108128 / LMG 27833 / NCIMB 13906 / BL2</strain>
    </source>
</reference>